<sequence>MVWLPRVPCVAAVILLLTVLSPPVALVRNSRPRFLEYSTSECHFYNGTQRVRFLERYIYNREEYVRFDSDVGEYRAVTELGRPDAEYWNSQPEILEDARATVDTYCRHNYEIFDNFLVPRRVEPTVTVYPTKTQPLEHHNLLVCSVSDFYPGNIEVRWFRNGKEEKTGIVSTGLVRNGDWTFQTLVMLETVPQSGEVYTCQVEHPSLTDPVTVEWKAQSTSAQNKMLSGVGGFVLGLLFLGAGLFIYFRNQKGQSGLQPTGLLS</sequence>
<gene>
    <name type="primary">H2-Eb1</name>
</gene>
<evidence type="ECO:0000255" key="1"/>
<evidence type="ECO:0000255" key="2">
    <source>
        <dbReference type="PROSITE-ProRule" id="PRU00114"/>
    </source>
</evidence>
<evidence type="ECO:0000269" key="3">
    <source>
    </source>
</evidence>
<evidence type="ECO:0000269" key="4">
    <source>
    </source>
</evidence>
<evidence type="ECO:0000269" key="5">
    <source>
    </source>
</evidence>
<evidence type="ECO:0000305" key="6"/>
<reference key="1">
    <citation type="journal article" date="1986" name="Science">
        <title>Molecular analysis of the hotspot of recombination in the murine major histocompatibility complex.</title>
        <authorList>
            <person name="Kobori J.A."/>
            <person name="Strauss E."/>
            <person name="Minard K."/>
            <person name="Hood L."/>
        </authorList>
    </citation>
    <scope>NUCLEOTIDE SEQUENCE [MRNA]</scope>
</reference>
<reference key="2">
    <citation type="journal article" date="1991" name="Immunogenetics">
        <title>Nonobese diabetic and nonobese nondiabetic mice have unique MHC class II haplotypes.</title>
        <authorList>
            <person name="Acha-Orbea H."/>
            <person name="Scarpellino L."/>
        </authorList>
    </citation>
    <scope>NUCLEOTIDE SEQUENCE [MRNA]</scope>
    <source>
        <strain>NOD</strain>
        <tissue>Spleen</tissue>
    </source>
</reference>
<reference key="3">
    <citation type="journal article" date="1991" name="J. Immunol.">
        <title>Molecular mapping of murine I region recombinants. III. Crossing over at two discrete sites within the beta 1-beta 2 intron of the E beta gene.</title>
        <authorList>
            <person name="Padgett K.A."/>
            <person name="Shreffler D.C."/>
            <person name="Saha B.K."/>
        </authorList>
    </citation>
    <scope>NUCLEOTIDE SEQUENCE [MRNA]</scope>
</reference>
<reference key="4">
    <citation type="journal article" date="1985" name="J. Biol. Chem.">
        <title>Oligosaccharide microheterogeneity of the murine major histocompatibility antigens. Reproducible site-specific patterns of sialylation and branching in asparagine-linked oligosaccharides.</title>
        <authorList>
            <person name="Swiedler S.J."/>
            <person name="Freed J.H."/>
            <person name="Tarentino A.L."/>
            <person name="Plummer T.H. Jr."/>
            <person name="Hart G.W."/>
        </authorList>
    </citation>
    <scope>GLYCOSYLATION AT ASN-46</scope>
</reference>
<reference key="5">
    <citation type="journal article" date="2006" name="Immunity">
        <title>Dendritic cells regulate exposure of MHC class II at their plasma membrane by oligoubiquitination.</title>
        <authorList>
            <person name="van Niel G."/>
            <person name="Wubbolts R."/>
            <person name="Ten Broeke T."/>
            <person name="Buschow S.I."/>
            <person name="Ossendorp F.A."/>
            <person name="Melief C.J."/>
            <person name="Raposo G."/>
            <person name="van Balkom B.W."/>
            <person name="Stoorvogel W."/>
        </authorList>
    </citation>
    <scope>UBIQUITINATION</scope>
</reference>
<reference key="6">
    <citation type="journal article" date="2006" name="Nature">
        <title>Surface expression of MHC class II in dendritic cells is controlled by regulated ubiquitination.</title>
        <authorList>
            <person name="Shin J.S."/>
            <person name="Ebersold M."/>
            <person name="Pypaert M."/>
            <person name="Delamarre L."/>
            <person name="Hartley A."/>
            <person name="Mellman I."/>
        </authorList>
    </citation>
    <scope>UBIQUITINATION</scope>
</reference>
<feature type="signal peptide">
    <location>
        <begin position="1"/>
        <end position="31"/>
    </location>
</feature>
<feature type="chain" id="PRO_0000019004" description="H-2 class II histocompatibility antigen, I-E beta chain">
    <location>
        <begin position="32"/>
        <end position="264"/>
    </location>
</feature>
<feature type="topological domain" description="Extracellular" evidence="1">
    <location>
        <begin position="32"/>
        <end position="225"/>
    </location>
</feature>
<feature type="transmembrane region" description="Helical" evidence="1">
    <location>
        <begin position="226"/>
        <end position="248"/>
    </location>
</feature>
<feature type="topological domain" description="Cytoplasmic" evidence="1">
    <location>
        <begin position="249"/>
        <end position="264"/>
    </location>
</feature>
<feature type="domain" description="Ig-like C1-type">
    <location>
        <begin position="124"/>
        <end position="214"/>
    </location>
</feature>
<feature type="region of interest" description="Beta-1">
    <location>
        <begin position="32"/>
        <end position="121"/>
    </location>
</feature>
<feature type="region of interest" description="Beta-2">
    <location>
        <begin position="122"/>
        <end position="215"/>
    </location>
</feature>
<feature type="region of interest" description="Connecting peptide">
    <location>
        <begin position="216"/>
        <end position="225"/>
    </location>
</feature>
<feature type="glycosylation site" description="N-linked (GlcNAc...) asparagine" evidence="5">
    <location>
        <position position="46"/>
    </location>
</feature>
<feature type="disulfide bond" evidence="2">
    <location>
        <begin position="42"/>
        <end position="106"/>
    </location>
</feature>
<feature type="disulfide bond" evidence="2">
    <location>
        <begin position="144"/>
        <end position="200"/>
    </location>
</feature>
<protein>
    <recommendedName>
        <fullName>H-2 class II histocompatibility antigen, I-E beta chain</fullName>
    </recommendedName>
</protein>
<comment type="subcellular location">
    <subcellularLocation>
        <location evidence="6">Membrane</location>
        <topology evidence="6">Single-pass type I membrane protein</topology>
    </subcellularLocation>
</comment>
<comment type="PTM">
    <text evidence="3 4">Ubiquitinated in immature dendritic cells leading to down-regulation of MHC class II.</text>
</comment>
<comment type="similarity">
    <text evidence="6">Belongs to the MHC class II family.</text>
</comment>
<name>HB2J_MOUSE</name>
<keyword id="KW-1064">Adaptive immunity</keyword>
<keyword id="KW-1015">Disulfide bond</keyword>
<keyword id="KW-0325">Glycoprotein</keyword>
<keyword id="KW-0391">Immunity</keyword>
<keyword id="KW-0472">Membrane</keyword>
<keyword id="KW-0491">MHC II</keyword>
<keyword id="KW-1185">Reference proteome</keyword>
<keyword id="KW-0732">Signal</keyword>
<keyword id="KW-0812">Transmembrane</keyword>
<keyword id="KW-1133">Transmembrane helix</keyword>
<keyword id="KW-0832">Ubl conjugation</keyword>
<proteinExistence type="evidence at protein level"/>
<organism>
    <name type="scientific">Mus musculus</name>
    <name type="common">Mouse</name>
    <dbReference type="NCBI Taxonomy" id="10090"/>
    <lineage>
        <taxon>Eukaryota</taxon>
        <taxon>Metazoa</taxon>
        <taxon>Chordata</taxon>
        <taxon>Craniata</taxon>
        <taxon>Vertebrata</taxon>
        <taxon>Euteleostomi</taxon>
        <taxon>Mammalia</taxon>
        <taxon>Eutheria</taxon>
        <taxon>Euarchontoglires</taxon>
        <taxon>Glires</taxon>
        <taxon>Rodentia</taxon>
        <taxon>Myomorpha</taxon>
        <taxon>Muroidea</taxon>
        <taxon>Muridae</taxon>
        <taxon>Murinae</taxon>
        <taxon>Mus</taxon>
        <taxon>Mus</taxon>
    </lineage>
</organism>
<accession>P18469</accession>
<dbReference type="EMBL" id="X52642">
    <property type="protein sequence ID" value="CAA36864.1"/>
    <property type="molecule type" value="mRNA"/>
</dbReference>
<dbReference type="PIR" id="I48422">
    <property type="entry name" value="I48422"/>
</dbReference>
<dbReference type="SMR" id="P18469"/>
<dbReference type="MINT" id="P18469"/>
<dbReference type="GlyCosmos" id="P18469">
    <property type="glycosylation" value="1 site, No reported glycans"/>
</dbReference>
<dbReference type="iPTMnet" id="P18469"/>
<dbReference type="PhosphoSitePlus" id="P18469"/>
<dbReference type="ProteomicsDB" id="270892"/>
<dbReference type="AGR" id="MGI:95901"/>
<dbReference type="MGI" id="MGI:95901">
    <property type="gene designation" value="H2-Eb1"/>
</dbReference>
<dbReference type="OrthoDB" id="9940220at2759"/>
<dbReference type="ChiTaRS" id="H2-Eb1">
    <property type="organism name" value="mouse"/>
</dbReference>
<dbReference type="Proteomes" id="UP000000589">
    <property type="component" value="Unplaced"/>
</dbReference>
<dbReference type="GO" id="GO:0042613">
    <property type="term" value="C:MHC class II protein complex"/>
    <property type="evidence" value="ECO:0007669"/>
    <property type="project" value="UniProtKB-KW"/>
</dbReference>
<dbReference type="GO" id="GO:0002250">
    <property type="term" value="P:adaptive immune response"/>
    <property type="evidence" value="ECO:0007669"/>
    <property type="project" value="UniProtKB-KW"/>
</dbReference>
<dbReference type="GO" id="GO:0019886">
    <property type="term" value="P:antigen processing and presentation of exogenous peptide antigen via MHC class II"/>
    <property type="evidence" value="ECO:0000314"/>
    <property type="project" value="MGI"/>
</dbReference>
<dbReference type="CDD" id="cd20998">
    <property type="entry name" value="IgC1_MHC_II_beta_I-E"/>
    <property type="match status" value="1"/>
</dbReference>
<dbReference type="FunFam" id="2.60.40.10:FF:000116">
    <property type="entry name" value="HLA class II histocompatibility antigen, DRB1-1 beta chain"/>
    <property type="match status" value="1"/>
</dbReference>
<dbReference type="FunFam" id="3.10.320.10:FF:000001">
    <property type="entry name" value="HLA class II histocompatibility antigen, DRB1-1 beta chain"/>
    <property type="match status" value="1"/>
</dbReference>
<dbReference type="Gene3D" id="3.10.320.10">
    <property type="entry name" value="Class II Histocompatibility Antigen, M Beta Chain, Chain B, domain 1"/>
    <property type="match status" value="1"/>
</dbReference>
<dbReference type="Gene3D" id="2.60.40.10">
    <property type="entry name" value="Immunoglobulins"/>
    <property type="match status" value="1"/>
</dbReference>
<dbReference type="InterPro" id="IPR007110">
    <property type="entry name" value="Ig-like_dom"/>
</dbReference>
<dbReference type="InterPro" id="IPR036179">
    <property type="entry name" value="Ig-like_dom_sf"/>
</dbReference>
<dbReference type="InterPro" id="IPR013783">
    <property type="entry name" value="Ig-like_fold"/>
</dbReference>
<dbReference type="InterPro" id="IPR003006">
    <property type="entry name" value="Ig/MHC_CS"/>
</dbReference>
<dbReference type="InterPro" id="IPR003597">
    <property type="entry name" value="Ig_C1-set"/>
</dbReference>
<dbReference type="InterPro" id="IPR050160">
    <property type="entry name" value="MHC/Immunoglobulin"/>
</dbReference>
<dbReference type="InterPro" id="IPR011162">
    <property type="entry name" value="MHC_I/II-like_Ag-recog"/>
</dbReference>
<dbReference type="InterPro" id="IPR014745">
    <property type="entry name" value="MHC_II_a/b_N"/>
</dbReference>
<dbReference type="InterPro" id="IPR000353">
    <property type="entry name" value="MHC_II_b_N"/>
</dbReference>
<dbReference type="PANTHER" id="PTHR19944:SF99">
    <property type="entry name" value="HLA CLASS II HISTOCOMPATIBILITY ANTIGEN, DRB1 BETA CHAIN"/>
    <property type="match status" value="1"/>
</dbReference>
<dbReference type="PANTHER" id="PTHR19944">
    <property type="entry name" value="MHC CLASS II-RELATED"/>
    <property type="match status" value="1"/>
</dbReference>
<dbReference type="Pfam" id="PF07654">
    <property type="entry name" value="C1-set"/>
    <property type="match status" value="1"/>
</dbReference>
<dbReference type="Pfam" id="PF00969">
    <property type="entry name" value="MHC_II_beta"/>
    <property type="match status" value="1"/>
</dbReference>
<dbReference type="SMART" id="SM00407">
    <property type="entry name" value="IGc1"/>
    <property type="match status" value="1"/>
</dbReference>
<dbReference type="SMART" id="SM00921">
    <property type="entry name" value="MHC_II_beta"/>
    <property type="match status" value="1"/>
</dbReference>
<dbReference type="SUPFAM" id="SSF48726">
    <property type="entry name" value="Immunoglobulin"/>
    <property type="match status" value="1"/>
</dbReference>
<dbReference type="SUPFAM" id="SSF54452">
    <property type="entry name" value="MHC antigen-recognition domain"/>
    <property type="match status" value="1"/>
</dbReference>
<dbReference type="PROSITE" id="PS50835">
    <property type="entry name" value="IG_LIKE"/>
    <property type="match status" value="1"/>
</dbReference>
<dbReference type="PROSITE" id="PS00290">
    <property type="entry name" value="IG_MHC"/>
    <property type="match status" value="1"/>
</dbReference>